<keyword id="KW-0963">Cytoplasm</keyword>
<keyword id="KW-0903">Direct protein sequencing</keyword>
<keyword id="KW-0597">Phosphoprotein</keyword>
<keyword id="KW-1185">Reference proteome</keyword>
<keyword id="KW-0687">Ribonucleoprotein</keyword>
<keyword id="KW-0689">Ribosomal protein</keyword>
<comment type="function">
    <text evidence="10">Component of the ribosome, a large ribonucleoprotein complex responsible for the synthesis of proteins in the cell. The small ribosomal subunit (SSU) binds messenger RNAs (mRNAs) and translates the encoded message by selecting cognate aminoacyl-transfer RNA (tRNA) molecules. The large subunit (LSU) contains the ribosomal catalytic site termed the peptidyl transferase center (PTC), which catalyzes the formation of peptide bonds, thereby polymerizing the amino acids delivered by tRNAs into a polypeptide chain. The nascent polypeptides leave the ribosome through a tunnel in the LSU and interact with protein factors that function in enzymatic processing, targeting, and the membrane insertion of nascent chains at the exit of the ribosomal tunnel.</text>
</comment>
<comment type="subunit">
    <text evidence="5 11">Component of the small ribosomal subunit (SSU). Mature yeast ribosomes consist of a small (40S) and a large (60S) subunit. The 40S small subunit contains 1 molecule of ribosomal RNA (18S rRNA) and 33 different proteins (encoded by 57 genes). The large 60S subunit contains 3 rRNA molecules (25S, 5.8S and 5S rRNA) and 46 different proteins (encoded by 81 genes) (PubMed:22096102, PubMed:9559554).</text>
</comment>
<comment type="subcellular location">
    <subcellularLocation>
        <location evidence="3 5">Cytoplasm</location>
    </subcellularLocation>
</comment>
<comment type="mass spectrometry" mass="6987.0" error="3.4" method="MALDI" evidence="6"/>
<comment type="miscellaneous">
    <text evidence="4">Present with 18500 molecules/cell in log phase SD medium.</text>
</comment>
<comment type="miscellaneous">
    <text evidence="9">There are 2 genes for eS30 in yeast.</text>
</comment>
<comment type="similarity">
    <text evidence="9">Belongs to the eukaryotic ribosomal protein eS30 family.</text>
</comment>
<evidence type="ECO:0000256" key="1">
    <source>
        <dbReference type="SAM" id="MobiDB-lite"/>
    </source>
</evidence>
<evidence type="ECO:0000269" key="2">
    <source>
    </source>
</evidence>
<evidence type="ECO:0000269" key="3">
    <source>
    </source>
</evidence>
<evidence type="ECO:0000269" key="4">
    <source>
    </source>
</evidence>
<evidence type="ECO:0000269" key="5">
    <source>
    </source>
</evidence>
<evidence type="ECO:0000269" key="6">
    <source>
    </source>
</evidence>
<evidence type="ECO:0000303" key="7">
    <source>
    </source>
</evidence>
<evidence type="ECO:0000303" key="8">
    <source>
    </source>
</evidence>
<evidence type="ECO:0000305" key="9"/>
<evidence type="ECO:0000305" key="10">
    <source>
    </source>
</evidence>
<evidence type="ECO:0000305" key="11">
    <source>
    </source>
</evidence>
<evidence type="ECO:0007744" key="12">
    <source>
    </source>
</evidence>
<gene>
    <name evidence="8" type="primary">RPS30B</name>
    <name type="ordered locus">YOR182C</name>
</gene>
<proteinExistence type="evidence at protein level"/>
<feature type="initiator methionine" description="Removed" evidence="2">
    <location>
        <position position="1"/>
    </location>
</feature>
<feature type="chain" id="PRO_0000409763" description="Small ribosomal subunit protein eS30B">
    <location>
        <begin position="2"/>
        <end position="63"/>
    </location>
</feature>
<feature type="region of interest" description="Disordered" evidence="1">
    <location>
        <begin position="1"/>
        <end position="35"/>
    </location>
</feature>
<feature type="modified residue" description="Phosphoserine" evidence="12">
    <location>
        <position position="16"/>
    </location>
</feature>
<feature type="modified residue" description="Phosphothreonine" evidence="12">
    <location>
        <position position="48"/>
    </location>
</feature>
<organism>
    <name type="scientific">Saccharomyces cerevisiae (strain ATCC 204508 / S288c)</name>
    <name type="common">Baker's yeast</name>
    <dbReference type="NCBI Taxonomy" id="559292"/>
    <lineage>
        <taxon>Eukaryota</taxon>
        <taxon>Fungi</taxon>
        <taxon>Dikarya</taxon>
        <taxon>Ascomycota</taxon>
        <taxon>Saccharomycotina</taxon>
        <taxon>Saccharomycetes</taxon>
        <taxon>Saccharomycetales</taxon>
        <taxon>Saccharomycetaceae</taxon>
        <taxon>Saccharomyces</taxon>
    </lineage>
</organism>
<dbReference type="EMBL" id="U83406">
    <property type="protein sequence ID" value="AAB41050.1"/>
    <property type="molecule type" value="mRNA"/>
</dbReference>
<dbReference type="EMBL" id="U83407">
    <property type="protein sequence ID" value="AAB41051.1"/>
    <property type="molecule type" value="Genomic_DNA"/>
</dbReference>
<dbReference type="EMBL" id="Z75090">
    <property type="protein sequence ID" value="CAA99391.1"/>
    <property type="molecule type" value="Genomic_DNA"/>
</dbReference>
<dbReference type="EMBL" id="BK006948">
    <property type="protein sequence ID" value="DAA10954.1"/>
    <property type="molecule type" value="Genomic_DNA"/>
</dbReference>
<dbReference type="PIR" id="S67074">
    <property type="entry name" value="S67074"/>
</dbReference>
<dbReference type="RefSeq" id="NP_014825.3">
    <property type="nucleotide sequence ID" value="NM_001183601.3"/>
</dbReference>
<dbReference type="SMR" id="P0CX34"/>
<dbReference type="BioGRID" id="31553">
    <property type="interactions" value="332"/>
</dbReference>
<dbReference type="BioGRID" id="34577">
    <property type="interactions" value="214"/>
</dbReference>
<dbReference type="FunCoup" id="P0CX34">
    <property type="interactions" value="407"/>
</dbReference>
<dbReference type="iPTMnet" id="P0CX34"/>
<dbReference type="EnsemblFungi" id="YLR287C-A_mRNA">
    <property type="protein sequence ID" value="YLR287C-A"/>
    <property type="gene ID" value="YLR287C-A"/>
</dbReference>
<dbReference type="EnsemblFungi" id="YOR182C_mRNA">
    <property type="protein sequence ID" value="YOR182C"/>
    <property type="gene ID" value="YOR182C"/>
</dbReference>
<dbReference type="GeneID" id="854354"/>
<dbReference type="KEGG" id="sce:YLR287C-A"/>
<dbReference type="KEGG" id="sce:YOR182C"/>
<dbReference type="AGR" id="SGD:S000005708"/>
<dbReference type="SGD" id="S000005708">
    <property type="gene designation" value="RPS30B"/>
</dbReference>
<dbReference type="VEuPathDB" id="FungiDB:YLR287C-A"/>
<dbReference type="VEuPathDB" id="FungiDB:YOR182C"/>
<dbReference type="GeneTree" id="ENSGT00940000176661"/>
<dbReference type="HOGENOM" id="CLU_010412_5_1_1"/>
<dbReference type="InParanoid" id="P0CX34"/>
<dbReference type="OMA" id="YNTQNVP"/>
<dbReference type="OrthoDB" id="199599at2759"/>
<dbReference type="BioCyc" id="YEAST:G3O-33693-MONOMER"/>
<dbReference type="BioGRID-ORCS" id="850994">
    <property type="hits" value="4 hits in 10 CRISPR screens"/>
</dbReference>
<dbReference type="BioGRID-ORCS" id="854354">
    <property type="hits" value="1 hit in 10 CRISPR screens"/>
</dbReference>
<dbReference type="CD-CODE" id="E03F929F">
    <property type="entry name" value="Stress granule"/>
</dbReference>
<dbReference type="PRO" id="PR:P0CX34"/>
<dbReference type="Proteomes" id="UP000002311">
    <property type="component" value="Chromosome XV"/>
</dbReference>
<dbReference type="RNAct" id="P0CX34">
    <property type="molecule type" value="protein"/>
</dbReference>
<dbReference type="ExpressionAtlas" id="P0CX34">
    <property type="expression patterns" value="baseline and differential"/>
</dbReference>
<dbReference type="GO" id="GO:0005829">
    <property type="term" value="C:cytosol"/>
    <property type="evidence" value="ECO:0000304"/>
    <property type="project" value="Reactome"/>
</dbReference>
<dbReference type="GO" id="GO:0022627">
    <property type="term" value="C:cytosolic small ribosomal subunit"/>
    <property type="evidence" value="ECO:0000318"/>
    <property type="project" value="GO_Central"/>
</dbReference>
<dbReference type="GO" id="GO:0003735">
    <property type="term" value="F:structural constituent of ribosome"/>
    <property type="evidence" value="ECO:0000303"/>
    <property type="project" value="SGD"/>
</dbReference>
<dbReference type="GO" id="GO:0002181">
    <property type="term" value="P:cytoplasmic translation"/>
    <property type="evidence" value="ECO:0000303"/>
    <property type="project" value="SGD"/>
</dbReference>
<dbReference type="InterPro" id="IPR006846">
    <property type="entry name" value="Ribosomal_eS30"/>
</dbReference>
<dbReference type="PANTHER" id="PTHR12650">
    <property type="entry name" value="40S RIBOSOMAL PROTEIN S30/UBIQUITIN-LIKE PROTEIN FUBI"/>
    <property type="match status" value="1"/>
</dbReference>
<dbReference type="PANTHER" id="PTHR12650:SF15">
    <property type="entry name" value="RIBOSOMAL PROTEIN S30, ISOFORM A"/>
    <property type="match status" value="1"/>
</dbReference>
<dbReference type="Pfam" id="PF04758">
    <property type="entry name" value="Ribosomal_S30"/>
    <property type="match status" value="1"/>
</dbReference>
<protein>
    <recommendedName>
        <fullName evidence="7">Small ribosomal subunit protein eS30B</fullName>
    </recommendedName>
    <alternativeName>
        <fullName evidence="8">40S ribosomal protein S30-B</fullName>
    </alternativeName>
</protein>
<sequence length="63" mass="7118">MAKVHGSLARAGKVKSQTPKVEKTEKPKKPKGRAYKRLLYTRRFVNVTLVNGKRRMNPGPSVQ</sequence>
<reference key="1">
    <citation type="journal article" date="1996" name="J. Biol. Chem.">
        <title>The yeast homolog of mammalian ribosomal protein S30 is expressed from a duplicated gene without a ubiquitin-like protein fusion sequence. Evolutionary implications.</title>
        <authorList>
            <person name="Baker R.T."/>
            <person name="Williamson N.A."/>
            <person name="Wettenhall R.E.H."/>
        </authorList>
    </citation>
    <scope>NUCLEOTIDE SEQUENCE [GENOMIC DNA / MRNA]</scope>
    <scope>PROTEIN SEQUENCE</scope>
    <scope>MASS SPECTROMETRY</scope>
    <source>
        <strain>YRB141</strain>
    </source>
</reference>
<reference key="2">
    <citation type="journal article" date="1997" name="Nature">
        <title>The nucleotide sequence of Saccharomyces cerevisiae chromosome XV.</title>
        <authorList>
            <person name="Dujon B."/>
            <person name="Albermann K."/>
            <person name="Aldea M."/>
            <person name="Alexandraki D."/>
            <person name="Ansorge W."/>
            <person name="Arino J."/>
            <person name="Benes V."/>
            <person name="Bohn C."/>
            <person name="Bolotin-Fukuhara M."/>
            <person name="Bordonne R."/>
            <person name="Boyer J."/>
            <person name="Camasses A."/>
            <person name="Casamayor A."/>
            <person name="Casas C."/>
            <person name="Cheret G."/>
            <person name="Cziepluch C."/>
            <person name="Daignan-Fornier B."/>
            <person name="Dang V.-D."/>
            <person name="de Haan M."/>
            <person name="Delius H."/>
            <person name="Durand P."/>
            <person name="Fairhead C."/>
            <person name="Feldmann H."/>
            <person name="Gaillon L."/>
            <person name="Galisson F."/>
            <person name="Gamo F.-J."/>
            <person name="Gancedo C."/>
            <person name="Goffeau A."/>
            <person name="Goulding S.E."/>
            <person name="Grivell L.A."/>
            <person name="Habbig B."/>
            <person name="Hand N.J."/>
            <person name="Hani J."/>
            <person name="Hattenhorst U."/>
            <person name="Hebling U."/>
            <person name="Hernando Y."/>
            <person name="Herrero E."/>
            <person name="Heumann K."/>
            <person name="Hiesel R."/>
            <person name="Hilger F."/>
            <person name="Hofmann B."/>
            <person name="Hollenberg C.P."/>
            <person name="Hughes B."/>
            <person name="Jauniaux J.-C."/>
            <person name="Kalogeropoulos A."/>
            <person name="Katsoulou C."/>
            <person name="Kordes E."/>
            <person name="Lafuente M.J."/>
            <person name="Landt O."/>
            <person name="Louis E.J."/>
            <person name="Maarse A.C."/>
            <person name="Madania A."/>
            <person name="Mannhaupt G."/>
            <person name="Marck C."/>
            <person name="Martin R.P."/>
            <person name="Mewes H.-W."/>
            <person name="Michaux G."/>
            <person name="Paces V."/>
            <person name="Parle-McDermott A.G."/>
            <person name="Pearson B.M."/>
            <person name="Perrin A."/>
            <person name="Pettersson B."/>
            <person name="Poch O."/>
            <person name="Pohl T.M."/>
            <person name="Poirey R."/>
            <person name="Portetelle D."/>
            <person name="Pujol A."/>
            <person name="Purnelle B."/>
            <person name="Ramezani Rad M."/>
            <person name="Rechmann S."/>
            <person name="Schwager C."/>
            <person name="Schweizer M."/>
            <person name="Sor F."/>
            <person name="Sterky F."/>
            <person name="Tarassov I.A."/>
            <person name="Teodoru C."/>
            <person name="Tettelin H."/>
            <person name="Thierry A."/>
            <person name="Tobiasch E."/>
            <person name="Tzermia M."/>
            <person name="Uhlen M."/>
            <person name="Unseld M."/>
            <person name="Valens M."/>
            <person name="Vandenbol M."/>
            <person name="Vetter I."/>
            <person name="Vlcek C."/>
            <person name="Voet M."/>
            <person name="Volckaert G."/>
            <person name="Voss H."/>
            <person name="Wambutt R."/>
            <person name="Wedler H."/>
            <person name="Wiemann S."/>
            <person name="Winsor B."/>
            <person name="Wolfe K.H."/>
            <person name="Zollner A."/>
            <person name="Zumstein E."/>
            <person name="Kleine K."/>
        </authorList>
    </citation>
    <scope>NUCLEOTIDE SEQUENCE [LARGE SCALE GENOMIC DNA]</scope>
    <source>
        <strain>ATCC 204508 / S288c</strain>
    </source>
</reference>
<reference key="3">
    <citation type="journal article" date="2014" name="G3 (Bethesda)">
        <title>The reference genome sequence of Saccharomyces cerevisiae: Then and now.</title>
        <authorList>
            <person name="Engel S.R."/>
            <person name="Dietrich F.S."/>
            <person name="Fisk D.G."/>
            <person name="Binkley G."/>
            <person name="Balakrishnan R."/>
            <person name="Costanzo M.C."/>
            <person name="Dwight S.S."/>
            <person name="Hitz B.C."/>
            <person name="Karra K."/>
            <person name="Nash R.S."/>
            <person name="Weng S."/>
            <person name="Wong E.D."/>
            <person name="Lloyd P."/>
            <person name="Skrzypek M.S."/>
            <person name="Miyasato S.R."/>
            <person name="Simison M."/>
            <person name="Cherry J.M."/>
        </authorList>
    </citation>
    <scope>GENOME REANNOTATION</scope>
    <source>
        <strain>ATCC 204508 / S288c</strain>
    </source>
</reference>
<reference key="4">
    <citation type="journal article" date="1998" name="Yeast">
        <title>The list of cytoplasmic ribosomal proteins of Saccharomyces cerevisiae.</title>
        <authorList>
            <person name="Planta R.J."/>
            <person name="Mager W.H."/>
        </authorList>
    </citation>
    <scope>NOMENCLATURE</scope>
    <scope>SUBUNIT</scope>
</reference>
<reference key="5">
    <citation type="journal article" date="1999" name="J. Biol. Chem.">
        <title>The action of N-terminal acetyltransferases on yeast ribosomal proteins.</title>
        <authorList>
            <person name="Arnold R.J."/>
            <person name="Polevoda B."/>
            <person name="Reilly J.P."/>
            <person name="Sherman F."/>
        </authorList>
    </citation>
    <scope>CLEAVAGE OF INITIATOR METHIONINE</scope>
</reference>
<reference key="6">
    <citation type="journal article" date="2003" name="Nature">
        <title>Global analysis of protein localization in budding yeast.</title>
        <authorList>
            <person name="Huh W.-K."/>
            <person name="Falvo J.V."/>
            <person name="Gerke L.C."/>
            <person name="Carroll A.S."/>
            <person name="Howson R.W."/>
            <person name="Weissman J.S."/>
            <person name="O'Shea E.K."/>
        </authorList>
    </citation>
    <scope>SUBCELLULAR LOCATION [LARGE SCALE ANALYSIS]</scope>
</reference>
<reference key="7">
    <citation type="journal article" date="2003" name="Nature">
        <title>Global analysis of protein expression in yeast.</title>
        <authorList>
            <person name="Ghaemmaghami S."/>
            <person name="Huh W.-K."/>
            <person name="Bower K."/>
            <person name="Howson R.W."/>
            <person name="Belle A."/>
            <person name="Dephoure N."/>
            <person name="O'Shea E.K."/>
            <person name="Weissman J.S."/>
        </authorList>
    </citation>
    <scope>LEVEL OF PROTEIN EXPRESSION [LARGE SCALE ANALYSIS]</scope>
</reference>
<reference key="8">
    <citation type="journal article" date="2007" name="Proc. Natl. Acad. Sci. U.S.A.">
        <title>Analysis of phosphorylation sites on proteins from Saccharomyces cerevisiae by electron transfer dissociation (ETD) mass spectrometry.</title>
        <authorList>
            <person name="Chi A."/>
            <person name="Huttenhower C."/>
            <person name="Geer L.Y."/>
            <person name="Coon J.J."/>
            <person name="Syka J.E.P."/>
            <person name="Bai D.L."/>
            <person name="Shabanowitz J."/>
            <person name="Burke D.J."/>
            <person name="Troyanskaya O.G."/>
            <person name="Hunt D.F."/>
        </authorList>
    </citation>
    <scope>PHOSPHORYLATION [LARGE SCALE ANALYSIS] AT SER-16 AND THR-48</scope>
    <scope>IDENTIFICATION BY MASS SPECTROMETRY [LARGE SCALE ANALYSIS]</scope>
</reference>
<reference key="9">
    <citation type="journal article" date="2011" name="Science">
        <title>The structure of the eukaryotic ribosome at 3.0 A resolution.</title>
        <authorList>
            <person name="Ben-Shem A."/>
            <person name="Garreau de Loubresse N."/>
            <person name="Melnikov S."/>
            <person name="Jenner L."/>
            <person name="Yusupova G."/>
            <person name="Yusupov M."/>
        </authorList>
    </citation>
    <scope>SUBUNIT</scope>
    <scope>SUBCELLULAR LOCATION</scope>
</reference>
<reference key="10">
    <citation type="journal article" date="2012" name="Proc. Natl. Acad. Sci. U.S.A.">
        <title>N-terminal acetylome analyses and functional insights of the N-terminal acetyltransferase NatB.</title>
        <authorList>
            <person name="Van Damme P."/>
            <person name="Lasa M."/>
            <person name="Polevoda B."/>
            <person name="Gazquez C."/>
            <person name="Elosegui-Artola A."/>
            <person name="Kim D.S."/>
            <person name="De Juan-Pardo E."/>
            <person name="Demeyer K."/>
            <person name="Hole K."/>
            <person name="Larrea E."/>
            <person name="Timmerman E."/>
            <person name="Prieto J."/>
            <person name="Arnesen T."/>
            <person name="Sherman F."/>
            <person name="Gevaert K."/>
            <person name="Aldabe R."/>
        </authorList>
    </citation>
    <scope>IDENTIFICATION BY MASS SPECTROMETRY [LARGE SCALE ANALYSIS]</scope>
</reference>
<reference key="11">
    <citation type="journal article" date="2014" name="Curr. Opin. Struct. Biol.">
        <title>A new system for naming ribosomal proteins.</title>
        <authorList>
            <person name="Ban N."/>
            <person name="Beckmann R."/>
            <person name="Cate J.H.D."/>
            <person name="Dinman J.D."/>
            <person name="Dragon F."/>
            <person name="Ellis S.R."/>
            <person name="Lafontaine D.L.J."/>
            <person name="Lindahl L."/>
            <person name="Liljas A."/>
            <person name="Lipton J.M."/>
            <person name="McAlear M.A."/>
            <person name="Moore P.B."/>
            <person name="Noller H.F."/>
            <person name="Ortega J."/>
            <person name="Panse V.G."/>
            <person name="Ramakrishnan V."/>
            <person name="Spahn C.M.T."/>
            <person name="Steitz T.A."/>
            <person name="Tchorzewski M."/>
            <person name="Tollervey D."/>
            <person name="Warren A.J."/>
            <person name="Williamson J.R."/>
            <person name="Wilson D."/>
            <person name="Yonath A."/>
            <person name="Yusupov M."/>
        </authorList>
    </citation>
    <scope>NOMENCLATURE</scope>
</reference>
<accession>P0CX34</accession>
<accession>D6VYT3</accession>
<accession>Q12087</accession>
<name>RS30B_YEAST</name>